<dbReference type="EMBL" id="AY100947">
    <property type="protein sequence ID" value="AAM55906.1"/>
    <property type="molecule type" value="Genomic_DNA"/>
</dbReference>
<dbReference type="RefSeq" id="YP_010273544.1">
    <property type="nucleotide sequence ID" value="NC_060789.1"/>
</dbReference>
<dbReference type="SMR" id="Q7H834"/>
<dbReference type="GeneID" id="70630191"/>
<dbReference type="GO" id="GO:0009539">
    <property type="term" value="C:photosystem II reaction center"/>
    <property type="evidence" value="ECO:0007669"/>
    <property type="project" value="InterPro"/>
</dbReference>
<dbReference type="GO" id="GO:0042170">
    <property type="term" value="C:plastid membrane"/>
    <property type="evidence" value="ECO:0007669"/>
    <property type="project" value="UniProtKB-SubCell"/>
</dbReference>
<dbReference type="GO" id="GO:0042651">
    <property type="term" value="C:thylakoid membrane"/>
    <property type="evidence" value="ECO:0007669"/>
    <property type="project" value="UniProtKB-UniRule"/>
</dbReference>
<dbReference type="GO" id="GO:0009055">
    <property type="term" value="F:electron transfer activity"/>
    <property type="evidence" value="ECO:0007669"/>
    <property type="project" value="UniProtKB-UniRule"/>
</dbReference>
<dbReference type="GO" id="GO:0020037">
    <property type="term" value="F:heme binding"/>
    <property type="evidence" value="ECO:0007669"/>
    <property type="project" value="InterPro"/>
</dbReference>
<dbReference type="GO" id="GO:0005506">
    <property type="term" value="F:iron ion binding"/>
    <property type="evidence" value="ECO:0007669"/>
    <property type="project" value="UniProtKB-UniRule"/>
</dbReference>
<dbReference type="HAMAP" id="MF_00643">
    <property type="entry name" value="PSII_PsbF"/>
    <property type="match status" value="1"/>
</dbReference>
<dbReference type="InterPro" id="IPR006241">
    <property type="entry name" value="PSII_cyt_b559_bsu"/>
</dbReference>
<dbReference type="InterPro" id="IPR006216">
    <property type="entry name" value="PSII_cyt_b559_CS"/>
</dbReference>
<dbReference type="InterPro" id="IPR013081">
    <property type="entry name" value="PSII_cyt_b559_N"/>
</dbReference>
<dbReference type="NCBIfam" id="TIGR01333">
    <property type="entry name" value="cyt_b559_beta"/>
    <property type="match status" value="1"/>
</dbReference>
<dbReference type="Pfam" id="PF00283">
    <property type="entry name" value="Cytochrom_B559"/>
    <property type="match status" value="1"/>
</dbReference>
<dbReference type="PIRSF" id="PIRSF000037">
    <property type="entry name" value="PsbF"/>
    <property type="match status" value="1"/>
</dbReference>
<dbReference type="SUPFAM" id="SSF161045">
    <property type="entry name" value="Cytochrome b559 subunits"/>
    <property type="match status" value="1"/>
</dbReference>
<dbReference type="PROSITE" id="PS00537">
    <property type="entry name" value="CYTOCHROME_B559"/>
    <property type="match status" value="1"/>
</dbReference>
<reference key="1">
    <citation type="journal article" date="2002" name="Am. J. Bot.">
        <title>Monophyly of the Convolvulaceae and circumscription of their major lineages based on DNA sequences of multiple chloroplast loci.</title>
        <authorList>
            <person name="Stefanovic S."/>
            <person name="Krueger L."/>
            <person name="Olmstead R.G."/>
        </authorList>
        <dbReference type="AGRICOLA" id="IND23320510"/>
    </citation>
    <scope>NUCLEOTIDE SEQUENCE [GENOMIC DNA]</scope>
</reference>
<sequence>MTIDRTYPIFTVRWLAVHGLAVPTVFFLGSISAMQFIQR</sequence>
<proteinExistence type="inferred from homology"/>
<accession>Q7H834</accession>
<feature type="chain" id="PRO_0000233637" description="Cytochrome b559 subunit beta">
    <location>
        <begin position="1"/>
        <end position="39"/>
    </location>
</feature>
<feature type="transmembrane region" description="Helical" evidence="1">
    <location>
        <begin position="14"/>
        <end position="30"/>
    </location>
</feature>
<feature type="binding site" description="axial binding residue" evidence="1">
    <location>
        <position position="18"/>
    </location>
    <ligand>
        <name>heme</name>
        <dbReference type="ChEBI" id="CHEBI:30413"/>
        <note>ligand shared with alpha subunit</note>
    </ligand>
    <ligandPart>
        <name>Fe</name>
        <dbReference type="ChEBI" id="CHEBI:18248"/>
    </ligandPart>
</feature>
<organism>
    <name type="scientific">Cuscuta japonica</name>
    <name type="common">Japanese dodder</name>
    <dbReference type="NCBI Taxonomy" id="81913"/>
    <lineage>
        <taxon>Eukaryota</taxon>
        <taxon>Viridiplantae</taxon>
        <taxon>Streptophyta</taxon>
        <taxon>Embryophyta</taxon>
        <taxon>Tracheophyta</taxon>
        <taxon>Spermatophyta</taxon>
        <taxon>Magnoliopsida</taxon>
        <taxon>eudicotyledons</taxon>
        <taxon>Gunneridae</taxon>
        <taxon>Pentapetalae</taxon>
        <taxon>asterids</taxon>
        <taxon>lamiids</taxon>
        <taxon>Solanales</taxon>
        <taxon>Convolvulaceae</taxon>
        <taxon>Cuscuteae</taxon>
        <taxon>Cuscuta</taxon>
        <taxon>Cuscuta subgen. Monogynella</taxon>
    </lineage>
</organism>
<keyword id="KW-0249">Electron transport</keyword>
<keyword id="KW-0349">Heme</keyword>
<keyword id="KW-0408">Iron</keyword>
<keyword id="KW-0472">Membrane</keyword>
<keyword id="KW-0479">Metal-binding</keyword>
<keyword id="KW-0602">Photosynthesis</keyword>
<keyword id="KW-0604">Photosystem II</keyword>
<keyword id="KW-0934">Plastid</keyword>
<keyword id="KW-0812">Transmembrane</keyword>
<keyword id="KW-1133">Transmembrane helix</keyword>
<keyword id="KW-0813">Transport</keyword>
<gene>
    <name evidence="1" type="primary">psbF</name>
</gene>
<comment type="function">
    <text evidence="1">This b-type cytochrome is tightly associated with the reaction center of photosystem II (PSII). PSII is a light-driven water:plastoquinone oxidoreductase that uses light energy to abstract electrons from H(2)O, generating O(2) and a proton gradient subsequently used for ATP formation. It consists of a core antenna complex that captures photons, and an electron transfer chain that converts photonic excitation into a charge separation.</text>
</comment>
<comment type="cofactor">
    <cofactor evidence="1">
        <name>heme b</name>
        <dbReference type="ChEBI" id="CHEBI:60344"/>
    </cofactor>
    <text evidence="1">With its partner (PsbE) binds heme. PSII binds additional chlorophylls, carotenoids and specific lipids.</text>
</comment>
<comment type="subunit">
    <text evidence="1">Heterodimer of an alpha subunit and a beta subunit. PSII is composed of 1 copy each of membrane proteins PsbA, PsbB, PsbC, PsbD, PsbE, PsbF, PsbH, PsbI, PsbJ, PsbK, PsbL, PsbM, PsbT, PsbX, PsbY, PsbZ, Psb30/Ycf12, at least 3 peripheral proteins of the oxygen-evolving complex and a large number of cofactors. It forms dimeric complexes.</text>
</comment>
<comment type="subcellular location">
    <subcellularLocation>
        <location evidence="2">Plastid membrane</location>
        <topology evidence="1">Single-pass membrane protein</topology>
    </subcellularLocation>
</comment>
<comment type="similarity">
    <text evidence="1">Belongs to the PsbE/PsbF family.</text>
</comment>
<comment type="caution">
    <text evidence="2">This organism being non-photosynthetic, the role of this protein is uncertain.</text>
</comment>
<evidence type="ECO:0000255" key="1">
    <source>
        <dbReference type="HAMAP-Rule" id="MF_00643"/>
    </source>
</evidence>
<evidence type="ECO:0000305" key="2"/>
<name>PSBF_CUSJA</name>
<protein>
    <recommendedName>
        <fullName evidence="1">Cytochrome b559 subunit beta</fullName>
    </recommendedName>
    <alternativeName>
        <fullName evidence="1">PSII reaction center subunit VI</fullName>
    </alternativeName>
</protein>
<geneLocation type="plastid"/>